<name>BPT_THIDA</name>
<evidence type="ECO:0000255" key="1">
    <source>
        <dbReference type="HAMAP-Rule" id="MF_00689"/>
    </source>
</evidence>
<proteinExistence type="inferred from homology"/>
<dbReference type="EC" id="2.3.2.29" evidence="1"/>
<dbReference type="EMBL" id="CP000116">
    <property type="protein sequence ID" value="AAZ97995.1"/>
    <property type="molecule type" value="Genomic_DNA"/>
</dbReference>
<dbReference type="RefSeq" id="WP_011312554.1">
    <property type="nucleotide sequence ID" value="NC_007404.1"/>
</dbReference>
<dbReference type="SMR" id="Q3SH94"/>
<dbReference type="STRING" id="292415.Tbd_2042"/>
<dbReference type="KEGG" id="tbd:Tbd_2042"/>
<dbReference type="eggNOG" id="COG2935">
    <property type="taxonomic scope" value="Bacteria"/>
</dbReference>
<dbReference type="HOGENOM" id="CLU_077607_0_0_4"/>
<dbReference type="OrthoDB" id="9782022at2"/>
<dbReference type="Proteomes" id="UP000008291">
    <property type="component" value="Chromosome"/>
</dbReference>
<dbReference type="GO" id="GO:0005737">
    <property type="term" value="C:cytoplasm"/>
    <property type="evidence" value="ECO:0007669"/>
    <property type="project" value="UniProtKB-SubCell"/>
</dbReference>
<dbReference type="GO" id="GO:0004057">
    <property type="term" value="F:arginyl-tRNA--protein transferase activity"/>
    <property type="evidence" value="ECO:0007669"/>
    <property type="project" value="InterPro"/>
</dbReference>
<dbReference type="GO" id="GO:0008914">
    <property type="term" value="F:leucyl-tRNA--protein transferase activity"/>
    <property type="evidence" value="ECO:0007669"/>
    <property type="project" value="UniProtKB-UniRule"/>
</dbReference>
<dbReference type="GO" id="GO:0071596">
    <property type="term" value="P:ubiquitin-dependent protein catabolic process via the N-end rule pathway"/>
    <property type="evidence" value="ECO:0007669"/>
    <property type="project" value="InterPro"/>
</dbReference>
<dbReference type="HAMAP" id="MF_00689">
    <property type="entry name" value="Bpt"/>
    <property type="match status" value="1"/>
</dbReference>
<dbReference type="InterPro" id="IPR016181">
    <property type="entry name" value="Acyl_CoA_acyltransferase"/>
</dbReference>
<dbReference type="InterPro" id="IPR017138">
    <property type="entry name" value="Asp_Glu_LeuTrfase"/>
</dbReference>
<dbReference type="InterPro" id="IPR030700">
    <property type="entry name" value="N-end_Aminoacyl_Trfase"/>
</dbReference>
<dbReference type="InterPro" id="IPR007472">
    <property type="entry name" value="N-end_Aminoacyl_Trfase_C"/>
</dbReference>
<dbReference type="InterPro" id="IPR007471">
    <property type="entry name" value="N-end_Aminoacyl_Trfase_N"/>
</dbReference>
<dbReference type="NCBIfam" id="NF002341">
    <property type="entry name" value="PRK01305.1-1"/>
    <property type="match status" value="1"/>
</dbReference>
<dbReference type="NCBIfam" id="NF002342">
    <property type="entry name" value="PRK01305.1-3"/>
    <property type="match status" value="1"/>
</dbReference>
<dbReference type="NCBIfam" id="NF002346">
    <property type="entry name" value="PRK01305.2-3"/>
    <property type="match status" value="1"/>
</dbReference>
<dbReference type="PANTHER" id="PTHR21367">
    <property type="entry name" value="ARGININE-TRNA-PROTEIN TRANSFERASE 1"/>
    <property type="match status" value="1"/>
</dbReference>
<dbReference type="PANTHER" id="PTHR21367:SF1">
    <property type="entry name" value="ARGINYL-TRNA--PROTEIN TRANSFERASE 1"/>
    <property type="match status" value="1"/>
</dbReference>
<dbReference type="Pfam" id="PF04377">
    <property type="entry name" value="ATE_C"/>
    <property type="match status" value="1"/>
</dbReference>
<dbReference type="Pfam" id="PF04376">
    <property type="entry name" value="ATE_N"/>
    <property type="match status" value="1"/>
</dbReference>
<dbReference type="PIRSF" id="PIRSF037208">
    <property type="entry name" value="ATE_pro_prd"/>
    <property type="match status" value="1"/>
</dbReference>
<dbReference type="SUPFAM" id="SSF55729">
    <property type="entry name" value="Acyl-CoA N-acyltransferases (Nat)"/>
    <property type="match status" value="1"/>
</dbReference>
<keyword id="KW-0012">Acyltransferase</keyword>
<keyword id="KW-0963">Cytoplasm</keyword>
<keyword id="KW-1185">Reference proteome</keyword>
<keyword id="KW-0808">Transferase</keyword>
<organism>
    <name type="scientific">Thiobacillus denitrificans (strain ATCC 25259 / T1)</name>
    <dbReference type="NCBI Taxonomy" id="292415"/>
    <lineage>
        <taxon>Bacteria</taxon>
        <taxon>Pseudomonadati</taxon>
        <taxon>Pseudomonadota</taxon>
        <taxon>Betaproteobacteria</taxon>
        <taxon>Nitrosomonadales</taxon>
        <taxon>Thiobacillaceae</taxon>
        <taxon>Thiobacillus</taxon>
    </lineage>
</organism>
<accession>Q3SH94</accession>
<gene>
    <name evidence="1" type="primary">bpt</name>
    <name type="ordered locus">Tbd_2042</name>
</gene>
<reference key="1">
    <citation type="journal article" date="2006" name="J. Bacteriol.">
        <title>The genome sequence of the obligately chemolithoautotrophic, facultatively anaerobic bacterium Thiobacillus denitrificans.</title>
        <authorList>
            <person name="Beller H.R."/>
            <person name="Chain P.S."/>
            <person name="Letain T.E."/>
            <person name="Chakicherla A."/>
            <person name="Larimer F.W."/>
            <person name="Richardson P.M."/>
            <person name="Coleman M.A."/>
            <person name="Wood A.P."/>
            <person name="Kelly D.P."/>
        </authorList>
    </citation>
    <scope>NUCLEOTIDE SEQUENCE [LARGE SCALE GENOMIC DNA]</scope>
    <source>
        <strain>ATCC 25259 / T1</strain>
    </source>
</reference>
<comment type="function">
    <text evidence="1">Functions in the N-end rule pathway of protein degradation where it conjugates Leu from its aminoacyl-tRNA to the N-termini of proteins containing an N-terminal aspartate or glutamate.</text>
</comment>
<comment type="catalytic activity">
    <reaction evidence="1">
        <text>N-terminal L-glutamyl-[protein] + L-leucyl-tRNA(Leu) = N-terminal L-leucyl-L-glutamyl-[protein] + tRNA(Leu) + H(+)</text>
        <dbReference type="Rhea" id="RHEA:50412"/>
        <dbReference type="Rhea" id="RHEA-COMP:9613"/>
        <dbReference type="Rhea" id="RHEA-COMP:9622"/>
        <dbReference type="Rhea" id="RHEA-COMP:12664"/>
        <dbReference type="Rhea" id="RHEA-COMP:12668"/>
        <dbReference type="ChEBI" id="CHEBI:15378"/>
        <dbReference type="ChEBI" id="CHEBI:64721"/>
        <dbReference type="ChEBI" id="CHEBI:78442"/>
        <dbReference type="ChEBI" id="CHEBI:78494"/>
        <dbReference type="ChEBI" id="CHEBI:133041"/>
        <dbReference type="EC" id="2.3.2.29"/>
    </reaction>
</comment>
<comment type="catalytic activity">
    <reaction evidence="1">
        <text>N-terminal L-aspartyl-[protein] + L-leucyl-tRNA(Leu) = N-terminal L-leucyl-L-aspartyl-[protein] + tRNA(Leu) + H(+)</text>
        <dbReference type="Rhea" id="RHEA:50420"/>
        <dbReference type="Rhea" id="RHEA-COMP:9613"/>
        <dbReference type="Rhea" id="RHEA-COMP:9622"/>
        <dbReference type="Rhea" id="RHEA-COMP:12669"/>
        <dbReference type="Rhea" id="RHEA-COMP:12674"/>
        <dbReference type="ChEBI" id="CHEBI:15378"/>
        <dbReference type="ChEBI" id="CHEBI:64720"/>
        <dbReference type="ChEBI" id="CHEBI:78442"/>
        <dbReference type="ChEBI" id="CHEBI:78494"/>
        <dbReference type="ChEBI" id="CHEBI:133042"/>
        <dbReference type="EC" id="2.3.2.29"/>
    </reaction>
</comment>
<comment type="subcellular location">
    <subcellularLocation>
        <location evidence="1">Cytoplasm</location>
    </subcellularLocation>
</comment>
<comment type="similarity">
    <text evidence="1">Belongs to the R-transferase family. Bpt subfamily.</text>
</comment>
<sequence>MHPTEPPFQRIQFYLTAQYDCSYLPGRLARSQVATPTHLIDHHAYGALIRAGFRRSGQFTYRPNCEGCQACVPVRVDVSGFVPNRTQRRCLKRNRGLAARFLPLDFKDEHYALYRAYLGSRHAGGGMDRDGPEQYTQFLLSSNVDSVLVEFRDGDAVVMVAVIDQVDDGLSAVYTFFDPAREQDSLGVYGVLWQIELAKRLDLPYLYLGYWIGESRKMAYKKQYPPLQGLVDGSWQALEA</sequence>
<protein>
    <recommendedName>
        <fullName evidence="1">Aspartate/glutamate leucyltransferase</fullName>
        <ecNumber evidence="1">2.3.2.29</ecNumber>
    </recommendedName>
</protein>
<feature type="chain" id="PRO_0000263221" description="Aspartate/glutamate leucyltransferase">
    <location>
        <begin position="1"/>
        <end position="240"/>
    </location>
</feature>